<dbReference type="EC" id="1.5.1.5" evidence="1"/>
<dbReference type="EC" id="3.5.4.9" evidence="1"/>
<dbReference type="EMBL" id="CP000251">
    <property type="protein sequence ID" value="ABC81021.1"/>
    <property type="molecule type" value="Genomic_DNA"/>
</dbReference>
<dbReference type="RefSeq" id="WP_011420304.1">
    <property type="nucleotide sequence ID" value="NC_007760.1"/>
</dbReference>
<dbReference type="SMR" id="Q2IQE1"/>
<dbReference type="STRING" id="290397.Adeh_1247"/>
<dbReference type="KEGG" id="ade:Adeh_1247"/>
<dbReference type="eggNOG" id="COG0190">
    <property type="taxonomic scope" value="Bacteria"/>
</dbReference>
<dbReference type="HOGENOM" id="CLU_034045_2_1_7"/>
<dbReference type="OrthoDB" id="9803580at2"/>
<dbReference type="UniPathway" id="UPA00193"/>
<dbReference type="Proteomes" id="UP000001935">
    <property type="component" value="Chromosome"/>
</dbReference>
<dbReference type="GO" id="GO:0005829">
    <property type="term" value="C:cytosol"/>
    <property type="evidence" value="ECO:0007669"/>
    <property type="project" value="TreeGrafter"/>
</dbReference>
<dbReference type="GO" id="GO:0004477">
    <property type="term" value="F:methenyltetrahydrofolate cyclohydrolase activity"/>
    <property type="evidence" value="ECO:0007669"/>
    <property type="project" value="UniProtKB-UniRule"/>
</dbReference>
<dbReference type="GO" id="GO:0004488">
    <property type="term" value="F:methylenetetrahydrofolate dehydrogenase (NADP+) activity"/>
    <property type="evidence" value="ECO:0007669"/>
    <property type="project" value="UniProtKB-UniRule"/>
</dbReference>
<dbReference type="GO" id="GO:0000105">
    <property type="term" value="P:L-histidine biosynthetic process"/>
    <property type="evidence" value="ECO:0007669"/>
    <property type="project" value="UniProtKB-KW"/>
</dbReference>
<dbReference type="GO" id="GO:0009086">
    <property type="term" value="P:methionine biosynthetic process"/>
    <property type="evidence" value="ECO:0007669"/>
    <property type="project" value="UniProtKB-KW"/>
</dbReference>
<dbReference type="GO" id="GO:0006164">
    <property type="term" value="P:purine nucleotide biosynthetic process"/>
    <property type="evidence" value="ECO:0007669"/>
    <property type="project" value="UniProtKB-KW"/>
</dbReference>
<dbReference type="GO" id="GO:0035999">
    <property type="term" value="P:tetrahydrofolate interconversion"/>
    <property type="evidence" value="ECO:0007669"/>
    <property type="project" value="UniProtKB-UniRule"/>
</dbReference>
<dbReference type="CDD" id="cd01080">
    <property type="entry name" value="NAD_bind_m-THF_DH_Cyclohyd"/>
    <property type="match status" value="1"/>
</dbReference>
<dbReference type="FunFam" id="3.40.50.720:FF:000006">
    <property type="entry name" value="Bifunctional protein FolD"/>
    <property type="match status" value="1"/>
</dbReference>
<dbReference type="FunFam" id="3.40.50.10860:FF:000005">
    <property type="entry name" value="C-1-tetrahydrofolate synthase, cytoplasmic, putative"/>
    <property type="match status" value="1"/>
</dbReference>
<dbReference type="Gene3D" id="3.40.50.10860">
    <property type="entry name" value="Leucine Dehydrogenase, chain A, domain 1"/>
    <property type="match status" value="1"/>
</dbReference>
<dbReference type="Gene3D" id="3.40.50.720">
    <property type="entry name" value="NAD(P)-binding Rossmann-like Domain"/>
    <property type="match status" value="1"/>
</dbReference>
<dbReference type="HAMAP" id="MF_01576">
    <property type="entry name" value="THF_DHG_CYH"/>
    <property type="match status" value="1"/>
</dbReference>
<dbReference type="InterPro" id="IPR046346">
    <property type="entry name" value="Aminoacid_DH-like_N_sf"/>
</dbReference>
<dbReference type="InterPro" id="IPR036291">
    <property type="entry name" value="NAD(P)-bd_dom_sf"/>
</dbReference>
<dbReference type="InterPro" id="IPR000672">
    <property type="entry name" value="THF_DH/CycHdrlase"/>
</dbReference>
<dbReference type="InterPro" id="IPR020630">
    <property type="entry name" value="THF_DH/CycHdrlase_cat_dom"/>
</dbReference>
<dbReference type="InterPro" id="IPR020867">
    <property type="entry name" value="THF_DH/CycHdrlase_CS"/>
</dbReference>
<dbReference type="InterPro" id="IPR020631">
    <property type="entry name" value="THF_DH/CycHdrlase_NAD-bd_dom"/>
</dbReference>
<dbReference type="NCBIfam" id="NF008058">
    <property type="entry name" value="PRK10792.1"/>
    <property type="match status" value="1"/>
</dbReference>
<dbReference type="NCBIfam" id="NF010779">
    <property type="entry name" value="PRK14182.1"/>
    <property type="match status" value="1"/>
</dbReference>
<dbReference type="NCBIfam" id="NF010783">
    <property type="entry name" value="PRK14186.1"/>
    <property type="match status" value="1"/>
</dbReference>
<dbReference type="PANTHER" id="PTHR48099:SF5">
    <property type="entry name" value="C-1-TETRAHYDROFOLATE SYNTHASE, CYTOPLASMIC"/>
    <property type="match status" value="1"/>
</dbReference>
<dbReference type="PANTHER" id="PTHR48099">
    <property type="entry name" value="C-1-TETRAHYDROFOLATE SYNTHASE, CYTOPLASMIC-RELATED"/>
    <property type="match status" value="1"/>
</dbReference>
<dbReference type="Pfam" id="PF00763">
    <property type="entry name" value="THF_DHG_CYH"/>
    <property type="match status" value="1"/>
</dbReference>
<dbReference type="Pfam" id="PF02882">
    <property type="entry name" value="THF_DHG_CYH_C"/>
    <property type="match status" value="1"/>
</dbReference>
<dbReference type="PRINTS" id="PR00085">
    <property type="entry name" value="THFDHDRGNASE"/>
</dbReference>
<dbReference type="SUPFAM" id="SSF53223">
    <property type="entry name" value="Aminoacid dehydrogenase-like, N-terminal domain"/>
    <property type="match status" value="1"/>
</dbReference>
<dbReference type="SUPFAM" id="SSF51735">
    <property type="entry name" value="NAD(P)-binding Rossmann-fold domains"/>
    <property type="match status" value="1"/>
</dbReference>
<dbReference type="PROSITE" id="PS00766">
    <property type="entry name" value="THF_DHG_CYH_1"/>
    <property type="match status" value="1"/>
</dbReference>
<name>FOLD_ANADE</name>
<gene>
    <name evidence="1" type="primary">folD</name>
    <name type="ordered locus">Adeh_1247</name>
</gene>
<keyword id="KW-0028">Amino-acid biosynthesis</keyword>
<keyword id="KW-0368">Histidine biosynthesis</keyword>
<keyword id="KW-0378">Hydrolase</keyword>
<keyword id="KW-0486">Methionine biosynthesis</keyword>
<keyword id="KW-0511">Multifunctional enzyme</keyword>
<keyword id="KW-0521">NADP</keyword>
<keyword id="KW-0554">One-carbon metabolism</keyword>
<keyword id="KW-0560">Oxidoreductase</keyword>
<keyword id="KW-0658">Purine biosynthesis</keyword>
<keyword id="KW-1185">Reference proteome</keyword>
<accession>Q2IQE1</accession>
<comment type="function">
    <text evidence="1">Catalyzes the oxidation of 5,10-methylenetetrahydrofolate to 5,10-methenyltetrahydrofolate and then the hydrolysis of 5,10-methenyltetrahydrofolate to 10-formyltetrahydrofolate.</text>
</comment>
<comment type="catalytic activity">
    <reaction evidence="1">
        <text>(6R)-5,10-methylene-5,6,7,8-tetrahydrofolate + NADP(+) = (6R)-5,10-methenyltetrahydrofolate + NADPH</text>
        <dbReference type="Rhea" id="RHEA:22812"/>
        <dbReference type="ChEBI" id="CHEBI:15636"/>
        <dbReference type="ChEBI" id="CHEBI:57455"/>
        <dbReference type="ChEBI" id="CHEBI:57783"/>
        <dbReference type="ChEBI" id="CHEBI:58349"/>
        <dbReference type="EC" id="1.5.1.5"/>
    </reaction>
</comment>
<comment type="catalytic activity">
    <reaction evidence="1">
        <text>(6R)-5,10-methenyltetrahydrofolate + H2O = (6R)-10-formyltetrahydrofolate + H(+)</text>
        <dbReference type="Rhea" id="RHEA:23700"/>
        <dbReference type="ChEBI" id="CHEBI:15377"/>
        <dbReference type="ChEBI" id="CHEBI:15378"/>
        <dbReference type="ChEBI" id="CHEBI:57455"/>
        <dbReference type="ChEBI" id="CHEBI:195366"/>
        <dbReference type="EC" id="3.5.4.9"/>
    </reaction>
</comment>
<comment type="pathway">
    <text evidence="1">One-carbon metabolism; tetrahydrofolate interconversion.</text>
</comment>
<comment type="subunit">
    <text evidence="1">Homodimer.</text>
</comment>
<comment type="similarity">
    <text evidence="1">Belongs to the tetrahydrofolate dehydrogenase/cyclohydrolase family.</text>
</comment>
<reference key="1">
    <citation type="submission" date="2006-01" db="EMBL/GenBank/DDBJ databases">
        <title>Complete sequence of Anaeromyxobacter dehalogenans 2CP-C.</title>
        <authorList>
            <person name="Copeland A."/>
            <person name="Lucas S."/>
            <person name="Lapidus A."/>
            <person name="Barry K."/>
            <person name="Detter J.C."/>
            <person name="Glavina T."/>
            <person name="Hammon N."/>
            <person name="Israni S."/>
            <person name="Pitluck S."/>
            <person name="Brettin T."/>
            <person name="Bruce D."/>
            <person name="Han C."/>
            <person name="Tapia R."/>
            <person name="Gilna P."/>
            <person name="Kiss H."/>
            <person name="Schmutz J."/>
            <person name="Larimer F."/>
            <person name="Land M."/>
            <person name="Kyrpides N."/>
            <person name="Anderson I."/>
            <person name="Sanford R.A."/>
            <person name="Ritalahti K.M."/>
            <person name="Thomas H.S."/>
            <person name="Kirby J.R."/>
            <person name="Zhulin I.B."/>
            <person name="Loeffler F.E."/>
            <person name="Richardson P."/>
        </authorList>
    </citation>
    <scope>NUCLEOTIDE SEQUENCE [LARGE SCALE GENOMIC DNA]</scope>
    <source>
        <strain>2CP-C</strain>
    </source>
</reference>
<feature type="chain" id="PRO_0000268259" description="Bifunctional protein FolD">
    <location>
        <begin position="1"/>
        <end position="282"/>
    </location>
</feature>
<feature type="binding site" evidence="1">
    <location>
        <begin position="164"/>
        <end position="166"/>
    </location>
    <ligand>
        <name>NADP(+)</name>
        <dbReference type="ChEBI" id="CHEBI:58349"/>
    </ligand>
</feature>
<feature type="binding site" evidence="1">
    <location>
        <position position="189"/>
    </location>
    <ligand>
        <name>NADP(+)</name>
        <dbReference type="ChEBI" id="CHEBI:58349"/>
    </ligand>
</feature>
<protein>
    <recommendedName>
        <fullName evidence="1">Bifunctional protein FolD</fullName>
    </recommendedName>
    <domain>
        <recommendedName>
            <fullName evidence="1">Methylenetetrahydrofolate dehydrogenase</fullName>
            <ecNumber evidence="1">1.5.1.5</ecNumber>
        </recommendedName>
    </domain>
    <domain>
        <recommendedName>
            <fullName evidence="1">Methenyltetrahydrofolate cyclohydrolase</fullName>
            <ecNumber evidence="1">3.5.4.9</ecNumber>
        </recommendedName>
    </domain>
</protein>
<evidence type="ECO:0000255" key="1">
    <source>
        <dbReference type="HAMAP-Rule" id="MF_01576"/>
    </source>
</evidence>
<sequence>MNLIDGKQIAAKVKGEVATEVRALAARGVQTGLTVVRVGDDPASAIYVRGKRKDCEEVGITSVEHHLPVTTTQAELLALIARLNADPAVHGILVQLPLPKHVDERAVLDAISPAKDADGFHPFNVGALSIGIAGVPRPCTPAGVMRMLDEARVDPKGKRALVVGRSNIVGKPMAMMLLERHATVTIAHSRTADLAGEVGRADILVAAIGKAELVKGAWVKEGAVVIDVGMNRLADGKLVGDVEFAAAAARASAITPVPGGVGPMTRAMLLVNTVELAKRVAR</sequence>
<proteinExistence type="inferred from homology"/>
<organism>
    <name type="scientific">Anaeromyxobacter dehalogenans (strain 2CP-C)</name>
    <dbReference type="NCBI Taxonomy" id="290397"/>
    <lineage>
        <taxon>Bacteria</taxon>
        <taxon>Pseudomonadati</taxon>
        <taxon>Myxococcota</taxon>
        <taxon>Myxococcia</taxon>
        <taxon>Myxococcales</taxon>
        <taxon>Cystobacterineae</taxon>
        <taxon>Anaeromyxobacteraceae</taxon>
        <taxon>Anaeromyxobacter</taxon>
    </lineage>
</organism>